<gene>
    <name evidence="1" type="primary">rps15</name>
    <name type="synonym">rpsO</name>
    <name type="ordered locus">MK1593</name>
</gene>
<evidence type="ECO:0000255" key="1">
    <source>
        <dbReference type="HAMAP-Rule" id="MF_01343"/>
    </source>
</evidence>
<evidence type="ECO:0000256" key="2">
    <source>
        <dbReference type="SAM" id="MobiDB-lite"/>
    </source>
</evidence>
<evidence type="ECO:0000305" key="3"/>
<name>RS15_METKA</name>
<feature type="chain" id="PRO_0000115608" description="Small ribosomal subunit protein uS15">
    <location>
        <begin position="1"/>
        <end position="149"/>
    </location>
</feature>
<feature type="region of interest" description="Disordered" evidence="2">
    <location>
        <begin position="1"/>
        <end position="25"/>
    </location>
</feature>
<feature type="compositionally biased region" description="Basic and acidic residues" evidence="2">
    <location>
        <begin position="1"/>
        <end position="11"/>
    </location>
</feature>
<keyword id="KW-1185">Reference proteome</keyword>
<keyword id="KW-0687">Ribonucleoprotein</keyword>
<keyword id="KW-0689">Ribosomal protein</keyword>
<comment type="subunit">
    <text evidence="1">Part of the 30S ribosomal subunit.</text>
</comment>
<comment type="similarity">
    <text evidence="1">Belongs to the universal ribosomal protein uS15 family.</text>
</comment>
<accession>Q8TV08</accession>
<sequence length="149" mass="17299">MARMHSRDRGKSGSTRPPRVAPPSWVEYSPEEVESLVVDLAKQGYEPAMIGIKLRDEYGIPDVKLITGKKITEILEEHGLAPELPEDLLNLIRRAKRVREHLKRHPKDLHSKRGLQLIESKIHRLVKYYKRKGVLPEDWKYDPEALHVE</sequence>
<proteinExistence type="inferred from homology"/>
<protein>
    <recommendedName>
        <fullName evidence="1">Small ribosomal subunit protein uS15</fullName>
    </recommendedName>
    <alternativeName>
        <fullName evidence="3">30S ribosomal protein S15</fullName>
    </alternativeName>
</protein>
<organism>
    <name type="scientific">Methanopyrus kandleri (strain AV19 / DSM 6324 / JCM 9639 / NBRC 100938)</name>
    <dbReference type="NCBI Taxonomy" id="190192"/>
    <lineage>
        <taxon>Archaea</taxon>
        <taxon>Methanobacteriati</taxon>
        <taxon>Methanobacteriota</taxon>
        <taxon>Methanomada group</taxon>
        <taxon>Methanopyri</taxon>
        <taxon>Methanopyrales</taxon>
        <taxon>Methanopyraceae</taxon>
        <taxon>Methanopyrus</taxon>
    </lineage>
</organism>
<dbReference type="EMBL" id="AE009439">
    <property type="protein sequence ID" value="AAM02806.1"/>
    <property type="molecule type" value="Genomic_DNA"/>
</dbReference>
<dbReference type="RefSeq" id="WP_011019961.1">
    <property type="nucleotide sequence ID" value="NC_003551.1"/>
</dbReference>
<dbReference type="SMR" id="Q8TV08"/>
<dbReference type="FunCoup" id="Q8TV08">
    <property type="interactions" value="155"/>
</dbReference>
<dbReference type="STRING" id="190192.MK1593"/>
<dbReference type="PaxDb" id="190192-MK1593"/>
<dbReference type="EnsemblBacteria" id="AAM02806">
    <property type="protein sequence ID" value="AAM02806"/>
    <property type="gene ID" value="MK1593"/>
</dbReference>
<dbReference type="GeneID" id="1478188"/>
<dbReference type="KEGG" id="mka:MK1593"/>
<dbReference type="PATRIC" id="fig|190192.8.peg.1754"/>
<dbReference type="HOGENOM" id="CLU_090139_2_0_2"/>
<dbReference type="InParanoid" id="Q8TV08"/>
<dbReference type="OrthoDB" id="6533at2157"/>
<dbReference type="Proteomes" id="UP000001826">
    <property type="component" value="Chromosome"/>
</dbReference>
<dbReference type="GO" id="GO:0022627">
    <property type="term" value="C:cytosolic small ribosomal subunit"/>
    <property type="evidence" value="ECO:0007669"/>
    <property type="project" value="TreeGrafter"/>
</dbReference>
<dbReference type="GO" id="GO:0070181">
    <property type="term" value="F:small ribosomal subunit rRNA binding"/>
    <property type="evidence" value="ECO:0007669"/>
    <property type="project" value="TreeGrafter"/>
</dbReference>
<dbReference type="GO" id="GO:0003735">
    <property type="term" value="F:structural constituent of ribosome"/>
    <property type="evidence" value="ECO:0007669"/>
    <property type="project" value="InterPro"/>
</dbReference>
<dbReference type="GO" id="GO:0006412">
    <property type="term" value="P:translation"/>
    <property type="evidence" value="ECO:0007669"/>
    <property type="project" value="UniProtKB-UniRule"/>
</dbReference>
<dbReference type="CDD" id="cd00353">
    <property type="entry name" value="Ribosomal_S15p_S13e"/>
    <property type="match status" value="1"/>
</dbReference>
<dbReference type="FunFam" id="1.10.287.10:FF:000003">
    <property type="entry name" value="40S ribosomal protein S13"/>
    <property type="match status" value="1"/>
</dbReference>
<dbReference type="FunFam" id="4.10.860.130:FF:000001">
    <property type="entry name" value="40S ribosomal protein S13"/>
    <property type="match status" value="1"/>
</dbReference>
<dbReference type="Gene3D" id="4.10.860.130">
    <property type="match status" value="1"/>
</dbReference>
<dbReference type="Gene3D" id="1.10.287.10">
    <property type="entry name" value="S15/NS1, RNA-binding"/>
    <property type="match status" value="1"/>
</dbReference>
<dbReference type="HAMAP" id="MF_01343_A">
    <property type="entry name" value="Ribosomal_uS15_A"/>
    <property type="match status" value="1"/>
</dbReference>
<dbReference type="InterPro" id="IPR000589">
    <property type="entry name" value="Ribosomal_uS15"/>
</dbReference>
<dbReference type="InterPro" id="IPR023029">
    <property type="entry name" value="Ribosomal_uS15_arc_euk"/>
</dbReference>
<dbReference type="InterPro" id="IPR012606">
    <property type="entry name" value="Ribosomal_uS15_N"/>
</dbReference>
<dbReference type="InterPro" id="IPR009068">
    <property type="entry name" value="uS15_NS1_RNA-bd_sf"/>
</dbReference>
<dbReference type="NCBIfam" id="NF006331">
    <property type="entry name" value="PRK08561.1"/>
    <property type="match status" value="1"/>
</dbReference>
<dbReference type="PANTHER" id="PTHR11885">
    <property type="entry name" value="RIBOSOMAL PROTEIN S15P/S13E"/>
    <property type="match status" value="1"/>
</dbReference>
<dbReference type="PANTHER" id="PTHR11885:SF6">
    <property type="entry name" value="SMALL RIBOSOMAL SUBUNIT PROTEIN US15"/>
    <property type="match status" value="1"/>
</dbReference>
<dbReference type="Pfam" id="PF08069">
    <property type="entry name" value="Ribosomal_S13_N"/>
    <property type="match status" value="1"/>
</dbReference>
<dbReference type="Pfam" id="PF00312">
    <property type="entry name" value="Ribosomal_S15"/>
    <property type="match status" value="1"/>
</dbReference>
<dbReference type="SMART" id="SM01386">
    <property type="entry name" value="Ribosomal_S13_N"/>
    <property type="match status" value="1"/>
</dbReference>
<dbReference type="SMART" id="SM01387">
    <property type="entry name" value="Ribosomal_S15"/>
    <property type="match status" value="1"/>
</dbReference>
<dbReference type="SUPFAM" id="SSF47060">
    <property type="entry name" value="S15/NS1 RNA-binding domain"/>
    <property type="match status" value="1"/>
</dbReference>
<dbReference type="PROSITE" id="PS00362">
    <property type="entry name" value="RIBOSOMAL_S15"/>
    <property type="match status" value="1"/>
</dbReference>
<reference key="1">
    <citation type="journal article" date="2002" name="Proc. Natl. Acad. Sci. U.S.A.">
        <title>The complete genome of hyperthermophile Methanopyrus kandleri AV19 and monophyly of archaeal methanogens.</title>
        <authorList>
            <person name="Slesarev A.I."/>
            <person name="Mezhevaya K.V."/>
            <person name="Makarova K.S."/>
            <person name="Polushin N.N."/>
            <person name="Shcherbinina O.V."/>
            <person name="Shakhova V.V."/>
            <person name="Belova G.I."/>
            <person name="Aravind L."/>
            <person name="Natale D.A."/>
            <person name="Rogozin I.B."/>
            <person name="Tatusov R.L."/>
            <person name="Wolf Y.I."/>
            <person name="Stetter K.O."/>
            <person name="Malykh A.G."/>
            <person name="Koonin E.V."/>
            <person name="Kozyavkin S.A."/>
        </authorList>
    </citation>
    <scope>NUCLEOTIDE SEQUENCE [LARGE SCALE GENOMIC DNA]</scope>
    <source>
        <strain>AV19 / DSM 6324 / JCM 9639 / NBRC 100938</strain>
    </source>
</reference>